<accession>B5E746</accession>
<name>ACPS_STRP4</name>
<proteinExistence type="inferred from homology"/>
<feature type="chain" id="PRO_1000093921" description="Holo-[acyl-carrier-protein] synthase">
    <location>
        <begin position="1"/>
        <end position="120"/>
    </location>
</feature>
<feature type="binding site" evidence="1">
    <location>
        <position position="8"/>
    </location>
    <ligand>
        <name>Mg(2+)</name>
        <dbReference type="ChEBI" id="CHEBI:18420"/>
    </ligand>
</feature>
<feature type="binding site" evidence="1">
    <location>
        <position position="58"/>
    </location>
    <ligand>
        <name>Mg(2+)</name>
        <dbReference type="ChEBI" id="CHEBI:18420"/>
    </ligand>
</feature>
<dbReference type="EC" id="2.7.8.7" evidence="1"/>
<dbReference type="EMBL" id="CP001015">
    <property type="protein sequence ID" value="ACF56122.1"/>
    <property type="molecule type" value="Genomic_DNA"/>
</dbReference>
<dbReference type="SMR" id="B5E746"/>
<dbReference type="KEGG" id="spx:SPG_1605"/>
<dbReference type="HOGENOM" id="CLU_089696_1_2_9"/>
<dbReference type="GO" id="GO:0005829">
    <property type="term" value="C:cytosol"/>
    <property type="evidence" value="ECO:0007669"/>
    <property type="project" value="TreeGrafter"/>
</dbReference>
<dbReference type="GO" id="GO:0008897">
    <property type="term" value="F:holo-[acyl-carrier-protein] synthase activity"/>
    <property type="evidence" value="ECO:0007669"/>
    <property type="project" value="UniProtKB-UniRule"/>
</dbReference>
<dbReference type="GO" id="GO:0000287">
    <property type="term" value="F:magnesium ion binding"/>
    <property type="evidence" value="ECO:0007669"/>
    <property type="project" value="UniProtKB-UniRule"/>
</dbReference>
<dbReference type="GO" id="GO:0006633">
    <property type="term" value="P:fatty acid biosynthetic process"/>
    <property type="evidence" value="ECO:0007669"/>
    <property type="project" value="UniProtKB-UniRule"/>
</dbReference>
<dbReference type="GO" id="GO:0019878">
    <property type="term" value="P:lysine biosynthetic process via aminoadipic acid"/>
    <property type="evidence" value="ECO:0007669"/>
    <property type="project" value="TreeGrafter"/>
</dbReference>
<dbReference type="Gene3D" id="3.90.470.20">
    <property type="entry name" value="4'-phosphopantetheinyl transferase domain"/>
    <property type="match status" value="1"/>
</dbReference>
<dbReference type="HAMAP" id="MF_00101">
    <property type="entry name" value="AcpS"/>
    <property type="match status" value="1"/>
</dbReference>
<dbReference type="InterPro" id="IPR008278">
    <property type="entry name" value="4-PPantetheinyl_Trfase_dom"/>
</dbReference>
<dbReference type="InterPro" id="IPR037143">
    <property type="entry name" value="4-PPantetheinyl_Trfase_dom_sf"/>
</dbReference>
<dbReference type="InterPro" id="IPR002582">
    <property type="entry name" value="ACPS"/>
</dbReference>
<dbReference type="InterPro" id="IPR050559">
    <property type="entry name" value="P-Pant_transferase_sf"/>
</dbReference>
<dbReference type="InterPro" id="IPR004568">
    <property type="entry name" value="Ppantetheine-prot_Trfase_dom"/>
</dbReference>
<dbReference type="NCBIfam" id="TIGR00516">
    <property type="entry name" value="acpS"/>
    <property type="match status" value="1"/>
</dbReference>
<dbReference type="NCBIfam" id="TIGR00556">
    <property type="entry name" value="pantethn_trn"/>
    <property type="match status" value="1"/>
</dbReference>
<dbReference type="PANTHER" id="PTHR12215:SF10">
    <property type="entry name" value="L-AMINOADIPATE-SEMIALDEHYDE DEHYDROGENASE-PHOSPHOPANTETHEINYL TRANSFERASE"/>
    <property type="match status" value="1"/>
</dbReference>
<dbReference type="PANTHER" id="PTHR12215">
    <property type="entry name" value="PHOSPHOPANTETHEINE TRANSFERASE"/>
    <property type="match status" value="1"/>
</dbReference>
<dbReference type="Pfam" id="PF01648">
    <property type="entry name" value="ACPS"/>
    <property type="match status" value="1"/>
</dbReference>
<dbReference type="SUPFAM" id="SSF56214">
    <property type="entry name" value="4'-phosphopantetheinyl transferase"/>
    <property type="match status" value="1"/>
</dbReference>
<gene>
    <name evidence="1" type="primary">acpS</name>
    <name type="ordered locus">SPG_1605</name>
</gene>
<comment type="function">
    <text evidence="1">Transfers the 4'-phosphopantetheine moiety from coenzyme A to a Ser of acyl-carrier-protein.</text>
</comment>
<comment type="catalytic activity">
    <reaction evidence="1">
        <text>apo-[ACP] + CoA = holo-[ACP] + adenosine 3',5'-bisphosphate + H(+)</text>
        <dbReference type="Rhea" id="RHEA:12068"/>
        <dbReference type="Rhea" id="RHEA-COMP:9685"/>
        <dbReference type="Rhea" id="RHEA-COMP:9690"/>
        <dbReference type="ChEBI" id="CHEBI:15378"/>
        <dbReference type="ChEBI" id="CHEBI:29999"/>
        <dbReference type="ChEBI" id="CHEBI:57287"/>
        <dbReference type="ChEBI" id="CHEBI:58343"/>
        <dbReference type="ChEBI" id="CHEBI:64479"/>
        <dbReference type="EC" id="2.7.8.7"/>
    </reaction>
</comment>
<comment type="cofactor">
    <cofactor evidence="1">
        <name>Mg(2+)</name>
        <dbReference type="ChEBI" id="CHEBI:18420"/>
    </cofactor>
</comment>
<comment type="subcellular location">
    <subcellularLocation>
        <location evidence="1">Cytoplasm</location>
    </subcellularLocation>
</comment>
<comment type="similarity">
    <text evidence="1">Belongs to the P-Pant transferase superfamily. AcpS family.</text>
</comment>
<evidence type="ECO:0000255" key="1">
    <source>
        <dbReference type="HAMAP-Rule" id="MF_00101"/>
    </source>
</evidence>
<protein>
    <recommendedName>
        <fullName evidence="1">Holo-[acyl-carrier-protein] synthase</fullName>
        <shortName evidence="1">Holo-ACP synthase</shortName>
        <ecNumber evidence="1">2.7.8.7</ecNumber>
    </recommendedName>
    <alternativeName>
        <fullName evidence="1">4'-phosphopantetheinyl transferase AcpS</fullName>
    </alternativeName>
</protein>
<reference key="1">
    <citation type="journal article" date="2001" name="Microb. Drug Resist.">
        <title>Annotated draft genomic sequence from a Streptococcus pneumoniae type 19F clinical isolate.</title>
        <authorList>
            <person name="Dopazo J."/>
            <person name="Mendoza A."/>
            <person name="Herrero J."/>
            <person name="Caldara F."/>
            <person name="Humbert Y."/>
            <person name="Friedli L."/>
            <person name="Guerrier M."/>
            <person name="Grand-Schenk E."/>
            <person name="Gandin C."/>
            <person name="de Francesco M."/>
            <person name="Polissi A."/>
            <person name="Buell G."/>
            <person name="Feger G."/>
            <person name="Garcia E."/>
            <person name="Peitsch M."/>
            <person name="Garcia-Bustos J.F."/>
        </authorList>
    </citation>
    <scope>NUCLEOTIDE SEQUENCE [LARGE SCALE GENOMIC DNA]</scope>
    <source>
        <strain>G54</strain>
    </source>
</reference>
<reference key="2">
    <citation type="submission" date="2008-03" db="EMBL/GenBank/DDBJ databases">
        <title>Pneumococcal beta glucoside metabolism investigated by whole genome comparison.</title>
        <authorList>
            <person name="Mulas L."/>
            <person name="Trappetti C."/>
            <person name="Hakenbeck R."/>
            <person name="Iannelli F."/>
            <person name="Pozzi G."/>
            <person name="Davidsen T.M."/>
            <person name="Tettelin H."/>
            <person name="Oggioni M."/>
        </authorList>
    </citation>
    <scope>NUCLEOTIDE SEQUENCE [LARGE SCALE GENOMIC DNA]</scope>
    <source>
        <strain>G54</strain>
    </source>
</reference>
<sequence>MIVGHGIDIEELASIESAVTRHEGFAKRVLTAQEMERFTSLKGRRQIEYLAGRWSAKEAFSKAMGTGISKLGFQDLEVLNNERGAPYFSQAPFSGKIWLSISHTDQFVTASVILEENHES</sequence>
<organism>
    <name type="scientific">Streptococcus pneumoniae serotype 19F (strain G54)</name>
    <dbReference type="NCBI Taxonomy" id="512566"/>
    <lineage>
        <taxon>Bacteria</taxon>
        <taxon>Bacillati</taxon>
        <taxon>Bacillota</taxon>
        <taxon>Bacilli</taxon>
        <taxon>Lactobacillales</taxon>
        <taxon>Streptococcaceae</taxon>
        <taxon>Streptococcus</taxon>
    </lineage>
</organism>
<keyword id="KW-0963">Cytoplasm</keyword>
<keyword id="KW-0275">Fatty acid biosynthesis</keyword>
<keyword id="KW-0276">Fatty acid metabolism</keyword>
<keyword id="KW-0444">Lipid biosynthesis</keyword>
<keyword id="KW-0443">Lipid metabolism</keyword>
<keyword id="KW-0460">Magnesium</keyword>
<keyword id="KW-0479">Metal-binding</keyword>
<keyword id="KW-0808">Transferase</keyword>